<reference key="1">
    <citation type="submission" date="2009-05" db="EMBL/GenBank/DDBJ databases">
        <title>The genome sequence of Ajellomyces capsulatus strain H143.</title>
        <authorList>
            <person name="Champion M."/>
            <person name="Cuomo C.A."/>
            <person name="Ma L.-J."/>
            <person name="Henn M.R."/>
            <person name="Sil A."/>
            <person name="Goldman B."/>
            <person name="Young S.K."/>
            <person name="Kodira C.D."/>
            <person name="Zeng Q."/>
            <person name="Koehrsen M."/>
            <person name="Alvarado L."/>
            <person name="Berlin A.M."/>
            <person name="Borenstein D."/>
            <person name="Chen Z."/>
            <person name="Engels R."/>
            <person name="Freedman E."/>
            <person name="Gellesch M."/>
            <person name="Goldberg J."/>
            <person name="Griggs A."/>
            <person name="Gujja S."/>
            <person name="Heiman D.I."/>
            <person name="Hepburn T.A."/>
            <person name="Howarth C."/>
            <person name="Jen D."/>
            <person name="Larson L."/>
            <person name="Lewis B."/>
            <person name="Mehta T."/>
            <person name="Park D."/>
            <person name="Pearson M."/>
            <person name="Roberts A."/>
            <person name="Saif S."/>
            <person name="Shea T.D."/>
            <person name="Shenoy N."/>
            <person name="Sisk P."/>
            <person name="Stolte C."/>
            <person name="Sykes S."/>
            <person name="Walk T."/>
            <person name="White J."/>
            <person name="Yandava C."/>
            <person name="Klein B."/>
            <person name="McEwen J.G."/>
            <person name="Puccia R."/>
            <person name="Goldman G.H."/>
            <person name="Felipe M.S."/>
            <person name="Nino-Vega G."/>
            <person name="San-Blas G."/>
            <person name="Taylor J.W."/>
            <person name="Mendoza L."/>
            <person name="Galagan J.E."/>
            <person name="Nusbaum C."/>
            <person name="Birren B.W."/>
        </authorList>
    </citation>
    <scope>NUCLEOTIDE SEQUENCE [LARGE SCALE GENOMIC DNA]</scope>
    <source>
        <strain>H143</strain>
    </source>
</reference>
<keyword id="KW-0256">Endoplasmic reticulum</keyword>
<keyword id="KW-0444">Lipid biosynthesis</keyword>
<keyword id="KW-0443">Lipid metabolism</keyword>
<keyword id="KW-0472">Membrane</keyword>
<keyword id="KW-0489">Methyltransferase</keyword>
<keyword id="KW-0594">Phospholipid biosynthesis</keyword>
<keyword id="KW-1208">Phospholipid metabolism</keyword>
<keyword id="KW-1185">Reference proteome</keyword>
<keyword id="KW-0949">S-adenosyl-L-methionine</keyword>
<keyword id="KW-0808">Transferase</keyword>
<keyword id="KW-0812">Transmembrane</keyword>
<keyword id="KW-1133">Transmembrane helix</keyword>
<organism>
    <name type="scientific">Ajellomyces capsulatus (strain H143)</name>
    <name type="common">Darling's disease fungus</name>
    <name type="synonym">Histoplasma capsulatum</name>
    <dbReference type="NCBI Taxonomy" id="544712"/>
    <lineage>
        <taxon>Eukaryota</taxon>
        <taxon>Fungi</taxon>
        <taxon>Dikarya</taxon>
        <taxon>Ascomycota</taxon>
        <taxon>Pezizomycotina</taxon>
        <taxon>Eurotiomycetes</taxon>
        <taxon>Eurotiomycetidae</taxon>
        <taxon>Onygenales</taxon>
        <taxon>Ajellomycetaceae</taxon>
        <taxon>Histoplasma</taxon>
    </lineage>
</organism>
<name>CHO2_AJECH</name>
<gene>
    <name type="primary">CHO2</name>
    <name type="ORF">HCDG_01354</name>
</gene>
<feature type="chain" id="PRO_0000405868" description="Phosphatidylethanolamine N-methyltransferase">
    <location>
        <begin position="1"/>
        <end position="969"/>
    </location>
</feature>
<feature type="topological domain" description="Lumenal" evidence="1">
    <location>
        <begin position="1"/>
        <end position="89"/>
    </location>
</feature>
<feature type="transmembrane region" description="Helical" evidence="1">
    <location>
        <begin position="90"/>
        <end position="110"/>
    </location>
</feature>
<feature type="topological domain" description="Cytoplasmic" evidence="1">
    <location>
        <begin position="111"/>
        <end position="113"/>
    </location>
</feature>
<feature type="transmembrane region" description="Helical" evidence="1">
    <location>
        <begin position="114"/>
        <end position="134"/>
    </location>
</feature>
<feature type="topological domain" description="Lumenal" evidence="1">
    <location>
        <begin position="135"/>
        <end position="199"/>
    </location>
</feature>
<feature type="transmembrane region" description="Helical" evidence="1">
    <location>
        <begin position="200"/>
        <end position="220"/>
    </location>
</feature>
<feature type="topological domain" description="Cytoplasmic" evidence="1">
    <location>
        <begin position="221"/>
        <end position="227"/>
    </location>
</feature>
<feature type="transmembrane region" description="Helical" evidence="1">
    <location>
        <begin position="228"/>
        <end position="248"/>
    </location>
</feature>
<feature type="topological domain" description="Lumenal" evidence="1">
    <location>
        <begin position="249"/>
        <end position="281"/>
    </location>
</feature>
<feature type="transmembrane region" description="Helical" evidence="1">
    <location>
        <begin position="282"/>
        <end position="302"/>
    </location>
</feature>
<feature type="topological domain" description="Cytoplasmic" evidence="1">
    <location>
        <begin position="303"/>
        <end position="304"/>
    </location>
</feature>
<feature type="transmembrane region" description="Helical" evidence="1">
    <location>
        <begin position="305"/>
        <end position="325"/>
    </location>
</feature>
<feature type="topological domain" description="Lumenal" evidence="1">
    <location>
        <begin position="326"/>
        <end position="399"/>
    </location>
</feature>
<feature type="transmembrane region" description="Helical" evidence="1">
    <location>
        <begin position="400"/>
        <end position="420"/>
    </location>
</feature>
<feature type="topological domain" description="Cytoplasmic" evidence="1">
    <location>
        <position position="421"/>
    </location>
</feature>
<feature type="transmembrane region" description="Helical" evidence="1">
    <location>
        <begin position="422"/>
        <end position="442"/>
    </location>
</feature>
<feature type="topological domain" description="Lumenal" evidence="1">
    <location>
        <begin position="443"/>
        <end position="473"/>
    </location>
</feature>
<feature type="transmembrane region" description="Helical" evidence="1">
    <location>
        <begin position="474"/>
        <end position="493"/>
    </location>
</feature>
<feature type="topological domain" description="Cytoplasmic" evidence="1">
    <location>
        <begin position="494"/>
        <end position="498"/>
    </location>
</feature>
<feature type="transmembrane region" description="Helical" evidence="1">
    <location>
        <begin position="499"/>
        <end position="519"/>
    </location>
</feature>
<feature type="topological domain" description="Lumenal" evidence="1">
    <location>
        <begin position="520"/>
        <end position="564"/>
    </location>
</feature>
<feature type="transmembrane region" description="Helical" evidence="1">
    <location>
        <begin position="565"/>
        <end position="585"/>
    </location>
</feature>
<feature type="topological domain" description="Cytoplasmic" evidence="1">
    <location>
        <begin position="586"/>
        <end position="969"/>
    </location>
</feature>
<feature type="region of interest" description="Disordered" evidence="2">
    <location>
        <begin position="1"/>
        <end position="40"/>
    </location>
</feature>
<feature type="region of interest" description="Disordered" evidence="2">
    <location>
        <begin position="705"/>
        <end position="725"/>
    </location>
</feature>
<feature type="compositionally biased region" description="Polar residues" evidence="2">
    <location>
        <begin position="1"/>
        <end position="15"/>
    </location>
</feature>
<feature type="compositionally biased region" description="Basic and acidic residues" evidence="2">
    <location>
        <begin position="714"/>
        <end position="725"/>
    </location>
</feature>
<sequence>MSEQANSSGIESLSNGLRERNAQTSKPIGDGEVTSQSLEDKLQIEEGDAADAEKKTFGRTPDGKVFTVPPTRDMVSQLLSPSEPKNISDIFVLAILGCHILLLWCLPSSFRIAAFAVIFLFWRASYNIGIGWLLHMQSNGRTLVCWAKKSNIFVNPSTGQNPHPTLYKMLKWELETKISEQYSFDEAPTEYNTWLVFRRVVDLILMCDFTSYCLFAIACGGRPAGESFIMLALRWTTGMSLVLFNLWVKLDAHRVVKDFAWYWGDFFYLIDQELTFDGVFEMAPHPMYSVGYAGYYGISLMAASYKVLFISILAHAAQFAFLVLVENPHIEKTYNVPPPRKRVAVDTDTKLQEDENSHEGSVVSDIANSAPVMPALQPVSMHNLLGLHNIDLYRSTDQSVLLAQLLFFALTTMTPSTPVYQFCFVLNAALWRIWYSVGIGYILNRQSNCKMWTRHFVKYGESNHEAWRQWKGTYHLSMTMTYASFIAAAWKMYSFPQDWGYGLVLLRHILGASLIALQIWTSSSIYESLGEFGWFFGDFFFDQSPKLTYSGIYRFLNNPERVLGLAGVWGAVLITSTKSLVFLALLSHTLTLAFIQLVERPHMQKLYGQSLRRDAGLVRSLKRSLPPSLKQIHGSVDKILDESFEFIEEFIEAARPKLATGVQTFVKDTSALFQKYPARVTISRLEPDLAGYDLKDYSITLEGTQPSQPAQFERASDKEGERARSMQFRRGEQENLIFEYGAPIKVKWTAPLNHSKKDWIGLYMVTDNTSREVTSVASQGRWIATNQASFDSETCEQGLISSDIVLKITREDCEPIDVASGEMVFSGDKLWWTQGVFEFRYHHNGKHNVMAVSRPFEIRIGRFDEDIVEADNYGLVRAAVEAALLPVVQNCFDRDPEIAPQTAEEHYGCLVERDGKYSKRVVFAVQHIVRADGNVRNLAWRICNAKKVLAPYSMSRSNGASTPTTEHED</sequence>
<proteinExistence type="inferred from homology"/>
<comment type="function">
    <text evidence="1">Catalyzes the first step of the methylation pathway of phosphatidylcholine biosynthesis, the SAM-dependent methylation of phosphatidylethanolamine (PE) to phosphatidylmonomethylethanolamine (PMME).</text>
</comment>
<comment type="catalytic activity">
    <reaction evidence="1">
        <text>a 1,2-diacyl-sn-glycero-3-phosphoethanolamine + S-adenosyl-L-methionine = a 1,2-diacyl-sn-glycero-3-phospho-N-methylethanolamine + S-adenosyl-L-homocysteine + H(+)</text>
        <dbReference type="Rhea" id="RHEA:11164"/>
        <dbReference type="ChEBI" id="CHEBI:15378"/>
        <dbReference type="ChEBI" id="CHEBI:57856"/>
        <dbReference type="ChEBI" id="CHEBI:59789"/>
        <dbReference type="ChEBI" id="CHEBI:64573"/>
        <dbReference type="ChEBI" id="CHEBI:64612"/>
        <dbReference type="EC" id="2.1.1.17"/>
    </reaction>
</comment>
<comment type="pathway">
    <text evidence="1">Phospholipid metabolism; phosphatidylcholine biosynthesis.</text>
</comment>
<comment type="subcellular location">
    <subcellularLocation>
        <location evidence="1">Endoplasmic reticulum membrane</location>
        <topology evidence="1">Multi-pass membrane protein</topology>
    </subcellularLocation>
</comment>
<comment type="similarity">
    <text evidence="1">Belongs to the class VI-like SAM-binding methyltransferase superfamily. CHO2 family.</text>
</comment>
<accession>C6H4B5</accession>
<protein>
    <recommendedName>
        <fullName evidence="1">Phosphatidylethanolamine N-methyltransferase</fullName>
        <shortName evidence="1">PE methyltransferase</shortName>
        <shortName evidence="1">PEAMT</shortName>
        <shortName evidence="1">PEMT</shortName>
        <ecNumber evidence="1">2.1.1.17</ecNumber>
    </recommendedName>
</protein>
<evidence type="ECO:0000255" key="1">
    <source>
        <dbReference type="HAMAP-Rule" id="MF_03217"/>
    </source>
</evidence>
<evidence type="ECO:0000256" key="2">
    <source>
        <dbReference type="SAM" id="MobiDB-lite"/>
    </source>
</evidence>
<dbReference type="EC" id="2.1.1.17" evidence="1"/>
<dbReference type="EMBL" id="GG692419">
    <property type="protein sequence ID" value="EER45775.1"/>
    <property type="molecule type" value="Genomic_DNA"/>
</dbReference>
<dbReference type="STRING" id="544712.C6H4B5"/>
<dbReference type="VEuPathDB" id="FungiDB:HCDG_01354"/>
<dbReference type="eggNOG" id="ENOG502QRGH">
    <property type="taxonomic scope" value="Eukaryota"/>
</dbReference>
<dbReference type="HOGENOM" id="CLU_005987_0_0_1"/>
<dbReference type="OMA" id="RIWYSVG"/>
<dbReference type="OrthoDB" id="3794at299071"/>
<dbReference type="UniPathway" id="UPA00753"/>
<dbReference type="Proteomes" id="UP000002624">
    <property type="component" value="Unassembled WGS sequence"/>
</dbReference>
<dbReference type="GO" id="GO:0005789">
    <property type="term" value="C:endoplasmic reticulum membrane"/>
    <property type="evidence" value="ECO:0007669"/>
    <property type="project" value="UniProtKB-SubCell"/>
</dbReference>
<dbReference type="GO" id="GO:0004608">
    <property type="term" value="F:phosphatidylethanolamine N-methyltransferase activity"/>
    <property type="evidence" value="ECO:0007669"/>
    <property type="project" value="UniProtKB-UniRule"/>
</dbReference>
<dbReference type="GO" id="GO:0032259">
    <property type="term" value="P:methylation"/>
    <property type="evidence" value="ECO:0007669"/>
    <property type="project" value="UniProtKB-KW"/>
</dbReference>
<dbReference type="GO" id="GO:0006656">
    <property type="term" value="P:phosphatidylcholine biosynthetic process"/>
    <property type="evidence" value="ECO:0007669"/>
    <property type="project" value="UniProtKB-UniRule"/>
</dbReference>
<dbReference type="FunFam" id="2.60.40.2840:FF:000006">
    <property type="entry name" value="Phosphatidylethanolamine N-methyltransferase"/>
    <property type="match status" value="1"/>
</dbReference>
<dbReference type="Gene3D" id="2.60.40.2840">
    <property type="match status" value="1"/>
</dbReference>
<dbReference type="HAMAP" id="MF_03217">
    <property type="entry name" value="PEMT"/>
    <property type="match status" value="1"/>
</dbReference>
<dbReference type="InterPro" id="IPR007318">
    <property type="entry name" value="Phopholipid_MeTrfase"/>
</dbReference>
<dbReference type="InterPro" id="IPR016219">
    <property type="entry name" value="Phosphatid-EA_MeTrfase_fun"/>
</dbReference>
<dbReference type="PANTHER" id="PTHR32138">
    <property type="entry name" value="PHOSPHATIDYLETHANOLAMINE N-METHYLTRANSFERASE"/>
    <property type="match status" value="1"/>
</dbReference>
<dbReference type="PANTHER" id="PTHR32138:SF0">
    <property type="entry name" value="PHOSPHATIDYLETHANOLAMINE N-METHYLTRANSFERASE"/>
    <property type="match status" value="1"/>
</dbReference>
<dbReference type="Pfam" id="PF04191">
    <property type="entry name" value="PEMT"/>
    <property type="match status" value="2"/>
</dbReference>
<dbReference type="PIRSF" id="PIRSF000383">
    <property type="entry name" value="PEAMT"/>
    <property type="match status" value="1"/>
</dbReference>
<dbReference type="PROSITE" id="PS51598">
    <property type="entry name" value="SAM_CHO2"/>
    <property type="match status" value="1"/>
</dbReference>